<proteinExistence type="evidence at transcript level"/>
<name>ODPB_PONAB</name>
<feature type="transit peptide" description="Mitochondrion" evidence="1">
    <location>
        <begin position="1"/>
        <end position="30"/>
    </location>
</feature>
<feature type="chain" id="PRO_0000271409" description="Pyruvate dehydrogenase E1 component subunit beta, mitochondrial">
    <location>
        <begin position="31"/>
        <end position="359"/>
    </location>
</feature>
<feature type="binding site" evidence="2">
    <location>
        <position position="89"/>
    </location>
    <ligand>
        <name>thiamine diphosphate</name>
        <dbReference type="ChEBI" id="CHEBI:58937"/>
        <note>ligand shared with alpha subunit</note>
    </ligand>
</feature>
<feature type="binding site" evidence="2">
    <location>
        <position position="142"/>
    </location>
    <ligand>
        <name>K(+)</name>
        <dbReference type="ChEBI" id="CHEBI:29103"/>
        <note>structural</note>
    </ligand>
</feature>
<feature type="binding site" evidence="2">
    <location>
        <position position="190"/>
    </location>
    <ligand>
        <name>K(+)</name>
        <dbReference type="ChEBI" id="CHEBI:29103"/>
        <note>structural</note>
    </ligand>
</feature>
<feature type="binding site" evidence="2">
    <location>
        <position position="191"/>
    </location>
    <ligand>
        <name>K(+)</name>
        <dbReference type="ChEBI" id="CHEBI:29103"/>
        <note>structural</note>
    </ligand>
</feature>
<feature type="binding site" evidence="2">
    <location>
        <position position="193"/>
    </location>
    <ligand>
        <name>K(+)</name>
        <dbReference type="ChEBI" id="CHEBI:29103"/>
        <note>structural</note>
    </ligand>
</feature>
<feature type="binding site" evidence="2">
    <location>
        <position position="195"/>
    </location>
    <ligand>
        <name>K(+)</name>
        <dbReference type="ChEBI" id="CHEBI:29103"/>
        <note>structural</note>
    </ligand>
</feature>
<feature type="site" description="Important for interaction with DLAT" evidence="2">
    <location>
        <position position="319"/>
    </location>
</feature>
<feature type="modified residue" description="Phosphotyrosine" evidence="3">
    <location>
        <position position="67"/>
    </location>
</feature>
<feature type="modified residue" description="N6-acetyllysine" evidence="3">
    <location>
        <position position="354"/>
    </location>
</feature>
<dbReference type="EC" id="1.2.4.1"/>
<dbReference type="EMBL" id="CR857655">
    <property type="protein sequence ID" value="CAH89928.1"/>
    <property type="molecule type" value="mRNA"/>
</dbReference>
<dbReference type="RefSeq" id="NP_001124905.1">
    <property type="nucleotide sequence ID" value="NM_001131433.2"/>
</dbReference>
<dbReference type="SMR" id="Q5RE79"/>
<dbReference type="FunCoup" id="Q5RE79">
    <property type="interactions" value="2008"/>
</dbReference>
<dbReference type="STRING" id="9601.ENSPPYP00000015393"/>
<dbReference type="Ensembl" id="ENSPPYT00000016006.3">
    <property type="protein sequence ID" value="ENSPPYP00000015393.2"/>
    <property type="gene ID" value="ENSPPYG00000013760.3"/>
</dbReference>
<dbReference type="GeneID" id="100171772"/>
<dbReference type="KEGG" id="pon:100171772"/>
<dbReference type="CTD" id="5162"/>
<dbReference type="eggNOG" id="KOG0524">
    <property type="taxonomic scope" value="Eukaryota"/>
</dbReference>
<dbReference type="GeneTree" id="ENSGT00940000155146"/>
<dbReference type="HOGENOM" id="CLU_012907_1_1_1"/>
<dbReference type="InParanoid" id="Q5RE79"/>
<dbReference type="OMA" id="WYANCPG"/>
<dbReference type="OrthoDB" id="10266385at2759"/>
<dbReference type="TreeFam" id="TF105674"/>
<dbReference type="Proteomes" id="UP000001595">
    <property type="component" value="Chromosome 3"/>
</dbReference>
<dbReference type="GO" id="GO:0005759">
    <property type="term" value="C:mitochondrial matrix"/>
    <property type="evidence" value="ECO:0007669"/>
    <property type="project" value="UniProtKB-SubCell"/>
</dbReference>
<dbReference type="GO" id="GO:0005654">
    <property type="term" value="C:nucleoplasm"/>
    <property type="evidence" value="ECO:0007669"/>
    <property type="project" value="Ensembl"/>
</dbReference>
<dbReference type="GO" id="GO:0045254">
    <property type="term" value="C:pyruvate dehydrogenase complex"/>
    <property type="evidence" value="ECO:0000250"/>
    <property type="project" value="UniProtKB"/>
</dbReference>
<dbReference type="GO" id="GO:0046872">
    <property type="term" value="F:metal ion binding"/>
    <property type="evidence" value="ECO:0007669"/>
    <property type="project" value="UniProtKB-KW"/>
</dbReference>
<dbReference type="GO" id="GO:0004739">
    <property type="term" value="F:pyruvate dehydrogenase (acetyl-transferring) activity"/>
    <property type="evidence" value="ECO:0007669"/>
    <property type="project" value="UniProtKB-EC"/>
</dbReference>
<dbReference type="GO" id="GO:0034604">
    <property type="term" value="F:pyruvate dehydrogenase (NAD+) activity"/>
    <property type="evidence" value="ECO:0007669"/>
    <property type="project" value="Ensembl"/>
</dbReference>
<dbReference type="GO" id="GO:0006006">
    <property type="term" value="P:glucose metabolic process"/>
    <property type="evidence" value="ECO:0007669"/>
    <property type="project" value="UniProtKB-KW"/>
</dbReference>
<dbReference type="GO" id="GO:0006086">
    <property type="term" value="P:pyruvate decarboxylation to acetyl-CoA"/>
    <property type="evidence" value="ECO:0000250"/>
    <property type="project" value="UniProtKB"/>
</dbReference>
<dbReference type="GO" id="GO:0006099">
    <property type="term" value="P:tricarboxylic acid cycle"/>
    <property type="evidence" value="ECO:0007669"/>
    <property type="project" value="UniProtKB-KW"/>
</dbReference>
<dbReference type="CDD" id="cd07036">
    <property type="entry name" value="TPP_PYR_E1-PDHc-beta_like"/>
    <property type="match status" value="1"/>
</dbReference>
<dbReference type="FunFam" id="3.40.50.920:FF:000001">
    <property type="entry name" value="Pyruvate dehydrogenase E1 beta subunit"/>
    <property type="match status" value="1"/>
</dbReference>
<dbReference type="FunFam" id="3.40.50.970:FF:000006">
    <property type="entry name" value="Pyruvate dehydrogenase E1 component subunit beta"/>
    <property type="match status" value="1"/>
</dbReference>
<dbReference type="Gene3D" id="3.40.50.920">
    <property type="match status" value="1"/>
</dbReference>
<dbReference type="Gene3D" id="3.40.50.970">
    <property type="match status" value="1"/>
</dbReference>
<dbReference type="InterPro" id="IPR027110">
    <property type="entry name" value="PDHB_mito-type"/>
</dbReference>
<dbReference type="InterPro" id="IPR029061">
    <property type="entry name" value="THDP-binding"/>
</dbReference>
<dbReference type="InterPro" id="IPR009014">
    <property type="entry name" value="Transketo_C/PFOR_II"/>
</dbReference>
<dbReference type="InterPro" id="IPR005475">
    <property type="entry name" value="Transketolase-like_Pyr-bd"/>
</dbReference>
<dbReference type="InterPro" id="IPR033248">
    <property type="entry name" value="Transketolase_C"/>
</dbReference>
<dbReference type="NCBIfam" id="NF006667">
    <property type="entry name" value="PRK09212.1"/>
    <property type="match status" value="1"/>
</dbReference>
<dbReference type="NCBIfam" id="NF008854">
    <property type="entry name" value="PRK11892.1"/>
    <property type="match status" value="1"/>
</dbReference>
<dbReference type="PANTHER" id="PTHR11624">
    <property type="entry name" value="DEHYDROGENASE RELATED"/>
    <property type="match status" value="1"/>
</dbReference>
<dbReference type="PANTHER" id="PTHR11624:SF96">
    <property type="entry name" value="PYRUVATE DEHYDROGENASE E1 COMPONENT SUBUNIT BETA, MITOCHONDRIAL"/>
    <property type="match status" value="1"/>
</dbReference>
<dbReference type="Pfam" id="PF02779">
    <property type="entry name" value="Transket_pyr"/>
    <property type="match status" value="1"/>
</dbReference>
<dbReference type="Pfam" id="PF02780">
    <property type="entry name" value="Transketolase_C"/>
    <property type="match status" value="1"/>
</dbReference>
<dbReference type="SMART" id="SM00861">
    <property type="entry name" value="Transket_pyr"/>
    <property type="match status" value="1"/>
</dbReference>
<dbReference type="SUPFAM" id="SSF52518">
    <property type="entry name" value="Thiamin diphosphate-binding fold (THDP-binding)"/>
    <property type="match status" value="1"/>
</dbReference>
<dbReference type="SUPFAM" id="SSF52922">
    <property type="entry name" value="TK C-terminal domain-like"/>
    <property type="match status" value="1"/>
</dbReference>
<gene>
    <name type="primary">PDHB</name>
</gene>
<reference key="1">
    <citation type="submission" date="2004-11" db="EMBL/GenBank/DDBJ databases">
        <authorList>
            <consortium name="The German cDNA consortium"/>
        </authorList>
    </citation>
    <scope>NUCLEOTIDE SEQUENCE [LARGE SCALE MRNA]</scope>
    <source>
        <tissue>Heart</tissue>
    </source>
</reference>
<accession>Q5RE79</accession>
<comment type="function">
    <text evidence="1">The pyruvate dehydrogenase complex catalyzes the overall conversion of pyruvate to acetyl-CoA and CO(2), and thereby links the glycolytic pathway to the tricarboxylic cycle.</text>
</comment>
<comment type="catalytic activity">
    <reaction>
        <text>N(6)-[(R)-lipoyl]-L-lysyl-[protein] + pyruvate + H(+) = N(6)-[(R)-S(8)-acetyldihydrolipoyl]-L-lysyl-[protein] + CO2</text>
        <dbReference type="Rhea" id="RHEA:19189"/>
        <dbReference type="Rhea" id="RHEA-COMP:10474"/>
        <dbReference type="Rhea" id="RHEA-COMP:10478"/>
        <dbReference type="ChEBI" id="CHEBI:15361"/>
        <dbReference type="ChEBI" id="CHEBI:15378"/>
        <dbReference type="ChEBI" id="CHEBI:16526"/>
        <dbReference type="ChEBI" id="CHEBI:83099"/>
        <dbReference type="ChEBI" id="CHEBI:83111"/>
        <dbReference type="EC" id="1.2.4.1"/>
    </reaction>
</comment>
<comment type="cofactor">
    <cofactor evidence="2">
        <name>thiamine diphosphate</name>
        <dbReference type="ChEBI" id="CHEBI:58937"/>
    </cofactor>
</comment>
<comment type="subunit">
    <text evidence="2">Heterotetramer of two PDHA1 and two PDHB subunits. The heterotetramer interacts with DLAT, and is part of the multimeric pyruvate dehydrogenase complex that contains multiple copies of pyruvate dehydrogenase (E1), dihydrolipoamide acetyltransferase (DLAT, E2) and lipoamide dehydrogenase (DLD, E3). These subunits are bound to an inner core composed of about 48 DLAT and 12 PDHX molecules. Interacts with DLAT.</text>
</comment>
<comment type="subcellular location">
    <subcellularLocation>
        <location evidence="1">Mitochondrion matrix</location>
    </subcellularLocation>
</comment>
<sequence length="359" mass="39333">MAAVSGLVRRPLREVSRLLKRRFHWTAPAALQVTVRDAINQGMDEELERDEKVFLLGEEVAQYDGAYKVSRGLWKKYGDKRIIDTPISEMGFAGIAVGAAMAGLRPICEFMTFNFSMQAIDQVINSAAKTYYMSGGLQPVPIVFRGPNGASAGVAAQHSQCFAAWYGHCPGLKVVSPWNSEDAKGLIKSAIRDNNPVVVLENELMYGVPFEFPPEAQSKDFLIPIGKAKIERQGTHITVVSHSRPVGHCLEAAAVLSKEGVECEVINMRTIRPMDMETIEASVMKTNHLVTVEGGWPQFGVGAEICARIMEGPAFNFLDAPAVRVTGADVPMPYAKILEDNSIPQVKDIIFAIKKTLNI</sequence>
<organism>
    <name type="scientific">Pongo abelii</name>
    <name type="common">Sumatran orangutan</name>
    <name type="synonym">Pongo pygmaeus abelii</name>
    <dbReference type="NCBI Taxonomy" id="9601"/>
    <lineage>
        <taxon>Eukaryota</taxon>
        <taxon>Metazoa</taxon>
        <taxon>Chordata</taxon>
        <taxon>Craniata</taxon>
        <taxon>Vertebrata</taxon>
        <taxon>Euteleostomi</taxon>
        <taxon>Mammalia</taxon>
        <taxon>Eutheria</taxon>
        <taxon>Euarchontoglires</taxon>
        <taxon>Primates</taxon>
        <taxon>Haplorrhini</taxon>
        <taxon>Catarrhini</taxon>
        <taxon>Hominidae</taxon>
        <taxon>Pongo</taxon>
    </lineage>
</organism>
<keyword id="KW-0007">Acetylation</keyword>
<keyword id="KW-0119">Carbohydrate metabolism</keyword>
<keyword id="KW-0313">Glucose metabolism</keyword>
<keyword id="KW-0479">Metal-binding</keyword>
<keyword id="KW-0496">Mitochondrion</keyword>
<keyword id="KW-0560">Oxidoreductase</keyword>
<keyword id="KW-0597">Phosphoprotein</keyword>
<keyword id="KW-0630">Potassium</keyword>
<keyword id="KW-0670">Pyruvate</keyword>
<keyword id="KW-1185">Reference proteome</keyword>
<keyword id="KW-0786">Thiamine pyrophosphate</keyword>
<keyword id="KW-0809">Transit peptide</keyword>
<keyword id="KW-0816">Tricarboxylic acid cycle</keyword>
<protein>
    <recommendedName>
        <fullName>Pyruvate dehydrogenase E1 component subunit beta, mitochondrial</fullName>
        <shortName>PDHE1-B</shortName>
        <ecNumber>1.2.4.1</ecNumber>
    </recommendedName>
</protein>
<evidence type="ECO:0000250" key="1"/>
<evidence type="ECO:0000250" key="2">
    <source>
        <dbReference type="UniProtKB" id="P11177"/>
    </source>
</evidence>
<evidence type="ECO:0000250" key="3">
    <source>
        <dbReference type="UniProtKB" id="Q9D051"/>
    </source>
</evidence>